<proteinExistence type="inferred from homology"/>
<dbReference type="EC" id="6.3.4.4" evidence="1"/>
<dbReference type="EMBL" id="CP000252">
    <property type="protein sequence ID" value="ABC77051.1"/>
    <property type="status" value="ALT_INIT"/>
    <property type="molecule type" value="Genomic_DNA"/>
</dbReference>
<dbReference type="RefSeq" id="WP_041584774.1">
    <property type="nucleotide sequence ID" value="NC_007759.1"/>
</dbReference>
<dbReference type="SMR" id="Q2LSI8"/>
<dbReference type="FunCoup" id="Q2LSI8">
    <property type="interactions" value="516"/>
</dbReference>
<dbReference type="STRING" id="56780.SYN_00122"/>
<dbReference type="KEGG" id="sat:SYN_00122"/>
<dbReference type="eggNOG" id="COG0104">
    <property type="taxonomic scope" value="Bacteria"/>
</dbReference>
<dbReference type="HOGENOM" id="CLU_029848_0_0_7"/>
<dbReference type="InParanoid" id="Q2LSI8"/>
<dbReference type="OrthoDB" id="9807553at2"/>
<dbReference type="UniPathway" id="UPA00075">
    <property type="reaction ID" value="UER00335"/>
</dbReference>
<dbReference type="Proteomes" id="UP000001933">
    <property type="component" value="Chromosome"/>
</dbReference>
<dbReference type="GO" id="GO:0005737">
    <property type="term" value="C:cytoplasm"/>
    <property type="evidence" value="ECO:0007669"/>
    <property type="project" value="UniProtKB-SubCell"/>
</dbReference>
<dbReference type="GO" id="GO:0004019">
    <property type="term" value="F:adenylosuccinate synthase activity"/>
    <property type="evidence" value="ECO:0007669"/>
    <property type="project" value="UniProtKB-UniRule"/>
</dbReference>
<dbReference type="GO" id="GO:0005525">
    <property type="term" value="F:GTP binding"/>
    <property type="evidence" value="ECO:0007669"/>
    <property type="project" value="UniProtKB-UniRule"/>
</dbReference>
<dbReference type="GO" id="GO:0000287">
    <property type="term" value="F:magnesium ion binding"/>
    <property type="evidence" value="ECO:0007669"/>
    <property type="project" value="UniProtKB-UniRule"/>
</dbReference>
<dbReference type="GO" id="GO:0044208">
    <property type="term" value="P:'de novo' AMP biosynthetic process"/>
    <property type="evidence" value="ECO:0007669"/>
    <property type="project" value="UniProtKB-UniRule"/>
</dbReference>
<dbReference type="GO" id="GO:0046040">
    <property type="term" value="P:IMP metabolic process"/>
    <property type="evidence" value="ECO:0007669"/>
    <property type="project" value="TreeGrafter"/>
</dbReference>
<dbReference type="CDD" id="cd03108">
    <property type="entry name" value="AdSS"/>
    <property type="match status" value="1"/>
</dbReference>
<dbReference type="FunFam" id="1.10.300.10:FF:000001">
    <property type="entry name" value="Adenylosuccinate synthetase"/>
    <property type="match status" value="1"/>
</dbReference>
<dbReference type="FunFam" id="3.90.170.10:FF:000001">
    <property type="entry name" value="Adenylosuccinate synthetase"/>
    <property type="match status" value="1"/>
</dbReference>
<dbReference type="Gene3D" id="3.40.440.10">
    <property type="entry name" value="Adenylosuccinate Synthetase, subunit A, domain 1"/>
    <property type="match status" value="1"/>
</dbReference>
<dbReference type="Gene3D" id="1.10.300.10">
    <property type="entry name" value="Adenylosuccinate Synthetase, subunit A, domain 2"/>
    <property type="match status" value="1"/>
</dbReference>
<dbReference type="Gene3D" id="3.90.170.10">
    <property type="entry name" value="Adenylosuccinate Synthetase, subunit A, domain 3"/>
    <property type="match status" value="1"/>
</dbReference>
<dbReference type="HAMAP" id="MF_00011">
    <property type="entry name" value="Adenylosucc_synth"/>
    <property type="match status" value="1"/>
</dbReference>
<dbReference type="InterPro" id="IPR018220">
    <property type="entry name" value="Adenylosuccin_syn_GTP-bd"/>
</dbReference>
<dbReference type="InterPro" id="IPR033128">
    <property type="entry name" value="Adenylosuccin_syn_Lys_AS"/>
</dbReference>
<dbReference type="InterPro" id="IPR042109">
    <property type="entry name" value="Adenylosuccinate_synth_dom1"/>
</dbReference>
<dbReference type="InterPro" id="IPR042110">
    <property type="entry name" value="Adenylosuccinate_synth_dom2"/>
</dbReference>
<dbReference type="InterPro" id="IPR042111">
    <property type="entry name" value="Adenylosuccinate_synth_dom3"/>
</dbReference>
<dbReference type="InterPro" id="IPR001114">
    <property type="entry name" value="Adenylosuccinate_synthetase"/>
</dbReference>
<dbReference type="InterPro" id="IPR027417">
    <property type="entry name" value="P-loop_NTPase"/>
</dbReference>
<dbReference type="NCBIfam" id="NF002223">
    <property type="entry name" value="PRK01117.1"/>
    <property type="match status" value="1"/>
</dbReference>
<dbReference type="NCBIfam" id="TIGR00184">
    <property type="entry name" value="purA"/>
    <property type="match status" value="1"/>
</dbReference>
<dbReference type="PANTHER" id="PTHR11846">
    <property type="entry name" value="ADENYLOSUCCINATE SYNTHETASE"/>
    <property type="match status" value="1"/>
</dbReference>
<dbReference type="PANTHER" id="PTHR11846:SF0">
    <property type="entry name" value="ADENYLOSUCCINATE SYNTHETASE"/>
    <property type="match status" value="1"/>
</dbReference>
<dbReference type="Pfam" id="PF00709">
    <property type="entry name" value="Adenylsucc_synt"/>
    <property type="match status" value="1"/>
</dbReference>
<dbReference type="SMART" id="SM00788">
    <property type="entry name" value="Adenylsucc_synt"/>
    <property type="match status" value="1"/>
</dbReference>
<dbReference type="SUPFAM" id="SSF52540">
    <property type="entry name" value="P-loop containing nucleoside triphosphate hydrolases"/>
    <property type="match status" value="1"/>
</dbReference>
<dbReference type="PROSITE" id="PS01266">
    <property type="entry name" value="ADENYLOSUCCIN_SYN_1"/>
    <property type="match status" value="1"/>
</dbReference>
<dbReference type="PROSITE" id="PS00513">
    <property type="entry name" value="ADENYLOSUCCIN_SYN_2"/>
    <property type="match status" value="1"/>
</dbReference>
<accession>Q2LSI8</accession>
<keyword id="KW-0963">Cytoplasm</keyword>
<keyword id="KW-0342">GTP-binding</keyword>
<keyword id="KW-0436">Ligase</keyword>
<keyword id="KW-0460">Magnesium</keyword>
<keyword id="KW-0479">Metal-binding</keyword>
<keyword id="KW-0547">Nucleotide-binding</keyword>
<keyword id="KW-0658">Purine biosynthesis</keyword>
<keyword id="KW-1185">Reference proteome</keyword>
<name>PURA_SYNAS</name>
<organism>
    <name type="scientific">Syntrophus aciditrophicus (strain SB)</name>
    <dbReference type="NCBI Taxonomy" id="56780"/>
    <lineage>
        <taxon>Bacteria</taxon>
        <taxon>Pseudomonadati</taxon>
        <taxon>Thermodesulfobacteriota</taxon>
        <taxon>Syntrophia</taxon>
        <taxon>Syntrophales</taxon>
        <taxon>Syntrophaceae</taxon>
        <taxon>Syntrophus</taxon>
    </lineage>
</organism>
<sequence>MANVVVVGTQWGDEGKGKIVDRYAEDAKVIARFQGGNNAGHTLVVKGEQTILHLIPSGILHNHKVCIIGNGVVVDPLVLIQEIESLKGRGLFPPDTRLFVSEKAHVIMPYHRQLDLARETRRSGVKIGTTGRGIGPAYEDKISRVGIRICDLLDETLFREKLALNVEEKNFTLTSLFGEPPVQEQEIFDEYQNYAEKIRSYAADTSLILEREMKLGKPILFEGAQGCHLDIEHGTYPFVTSSSTVAGNASCGTGIGPSSLNEVIGICKAYTTRVGEGPFLTELNDEIGDRLQRVGQEFGATTGRRRRCGWLDMVLVRHAVRVSGITGLAITKLDVLTGLKTLKLCVGYQSGNDLYPESVPPNPRILQQCQPVYEEMAGWTEDIRGARQMDDLPSNARRYLERLESLTGVPVILVSVGAGREETIVLKNPFSS</sequence>
<comment type="function">
    <text evidence="1">Plays an important role in the de novo pathway of purine nucleotide biosynthesis. Catalyzes the first committed step in the biosynthesis of AMP from IMP.</text>
</comment>
<comment type="catalytic activity">
    <reaction evidence="1">
        <text>IMP + L-aspartate + GTP = N(6)-(1,2-dicarboxyethyl)-AMP + GDP + phosphate + 2 H(+)</text>
        <dbReference type="Rhea" id="RHEA:15753"/>
        <dbReference type="ChEBI" id="CHEBI:15378"/>
        <dbReference type="ChEBI" id="CHEBI:29991"/>
        <dbReference type="ChEBI" id="CHEBI:37565"/>
        <dbReference type="ChEBI" id="CHEBI:43474"/>
        <dbReference type="ChEBI" id="CHEBI:57567"/>
        <dbReference type="ChEBI" id="CHEBI:58053"/>
        <dbReference type="ChEBI" id="CHEBI:58189"/>
        <dbReference type="EC" id="6.3.4.4"/>
    </reaction>
</comment>
<comment type="cofactor">
    <cofactor evidence="1">
        <name>Mg(2+)</name>
        <dbReference type="ChEBI" id="CHEBI:18420"/>
    </cofactor>
    <text evidence="1">Binds 1 Mg(2+) ion per subunit.</text>
</comment>
<comment type="pathway">
    <text evidence="1">Purine metabolism; AMP biosynthesis via de novo pathway; AMP from IMP: step 1/2.</text>
</comment>
<comment type="subunit">
    <text evidence="1">Homodimer.</text>
</comment>
<comment type="subcellular location">
    <subcellularLocation>
        <location evidence="1">Cytoplasm</location>
    </subcellularLocation>
</comment>
<comment type="similarity">
    <text evidence="1">Belongs to the adenylosuccinate synthetase family.</text>
</comment>
<comment type="sequence caution" evidence="2">
    <conflict type="erroneous initiation">
        <sequence resource="EMBL-CDS" id="ABC77051"/>
    </conflict>
</comment>
<gene>
    <name evidence="1" type="primary">purA</name>
    <name type="ordered locus">SYNAS_11720</name>
    <name type="ORF">SYN_00122</name>
</gene>
<feature type="chain" id="PRO_0000321813" description="Adenylosuccinate synthetase">
    <location>
        <begin position="1"/>
        <end position="432"/>
    </location>
</feature>
<feature type="active site" description="Proton acceptor" evidence="1">
    <location>
        <position position="13"/>
    </location>
</feature>
<feature type="active site" description="Proton donor" evidence="1">
    <location>
        <position position="41"/>
    </location>
</feature>
<feature type="binding site" evidence="1">
    <location>
        <begin position="12"/>
        <end position="18"/>
    </location>
    <ligand>
        <name>GTP</name>
        <dbReference type="ChEBI" id="CHEBI:37565"/>
    </ligand>
</feature>
<feature type="binding site" description="in other chain" evidence="1">
    <location>
        <begin position="13"/>
        <end position="16"/>
    </location>
    <ligand>
        <name>IMP</name>
        <dbReference type="ChEBI" id="CHEBI:58053"/>
        <note>ligand shared between dimeric partners</note>
    </ligand>
</feature>
<feature type="binding site" evidence="1">
    <location>
        <position position="13"/>
    </location>
    <ligand>
        <name>Mg(2+)</name>
        <dbReference type="ChEBI" id="CHEBI:18420"/>
    </ligand>
</feature>
<feature type="binding site" description="in other chain" evidence="1">
    <location>
        <begin position="38"/>
        <end position="41"/>
    </location>
    <ligand>
        <name>IMP</name>
        <dbReference type="ChEBI" id="CHEBI:58053"/>
        <note>ligand shared between dimeric partners</note>
    </ligand>
</feature>
<feature type="binding site" evidence="1">
    <location>
        <begin position="40"/>
        <end position="42"/>
    </location>
    <ligand>
        <name>GTP</name>
        <dbReference type="ChEBI" id="CHEBI:37565"/>
    </ligand>
</feature>
<feature type="binding site" evidence="1">
    <location>
        <position position="40"/>
    </location>
    <ligand>
        <name>Mg(2+)</name>
        <dbReference type="ChEBI" id="CHEBI:18420"/>
    </ligand>
</feature>
<feature type="binding site" description="in other chain" evidence="1">
    <location>
        <position position="130"/>
    </location>
    <ligand>
        <name>IMP</name>
        <dbReference type="ChEBI" id="CHEBI:58053"/>
        <note>ligand shared between dimeric partners</note>
    </ligand>
</feature>
<feature type="binding site" evidence="1">
    <location>
        <position position="144"/>
    </location>
    <ligand>
        <name>IMP</name>
        <dbReference type="ChEBI" id="CHEBI:58053"/>
        <note>ligand shared between dimeric partners</note>
    </ligand>
</feature>
<feature type="binding site" description="in other chain" evidence="1">
    <location>
        <position position="225"/>
    </location>
    <ligand>
        <name>IMP</name>
        <dbReference type="ChEBI" id="CHEBI:58053"/>
        <note>ligand shared between dimeric partners</note>
    </ligand>
</feature>
<feature type="binding site" description="in other chain" evidence="1">
    <location>
        <position position="240"/>
    </location>
    <ligand>
        <name>IMP</name>
        <dbReference type="ChEBI" id="CHEBI:58053"/>
        <note>ligand shared between dimeric partners</note>
    </ligand>
</feature>
<feature type="binding site" evidence="1">
    <location>
        <begin position="300"/>
        <end position="306"/>
    </location>
    <ligand>
        <name>substrate</name>
    </ligand>
</feature>
<feature type="binding site" description="in other chain" evidence="1">
    <location>
        <position position="304"/>
    </location>
    <ligand>
        <name>IMP</name>
        <dbReference type="ChEBI" id="CHEBI:58053"/>
        <note>ligand shared between dimeric partners</note>
    </ligand>
</feature>
<feature type="binding site" evidence="1">
    <location>
        <position position="306"/>
    </location>
    <ligand>
        <name>GTP</name>
        <dbReference type="ChEBI" id="CHEBI:37565"/>
    </ligand>
</feature>
<feature type="binding site" evidence="1">
    <location>
        <begin position="332"/>
        <end position="334"/>
    </location>
    <ligand>
        <name>GTP</name>
        <dbReference type="ChEBI" id="CHEBI:37565"/>
    </ligand>
</feature>
<feature type="binding site" evidence="1">
    <location>
        <begin position="415"/>
        <end position="417"/>
    </location>
    <ligand>
        <name>GTP</name>
        <dbReference type="ChEBI" id="CHEBI:37565"/>
    </ligand>
</feature>
<protein>
    <recommendedName>
        <fullName evidence="1">Adenylosuccinate synthetase</fullName>
        <shortName evidence="1">AMPSase</shortName>
        <shortName evidence="1">AdSS</shortName>
        <ecNumber evidence="1">6.3.4.4</ecNumber>
    </recommendedName>
    <alternativeName>
        <fullName evidence="1">IMP--aspartate ligase</fullName>
    </alternativeName>
</protein>
<reference key="1">
    <citation type="journal article" date="2007" name="Proc. Natl. Acad. Sci. U.S.A.">
        <title>The genome of Syntrophus aciditrophicus: life at the thermodynamic limit of microbial growth.</title>
        <authorList>
            <person name="McInerney M.J."/>
            <person name="Rohlin L."/>
            <person name="Mouttaki H."/>
            <person name="Kim U."/>
            <person name="Krupp R.S."/>
            <person name="Rios-Hernandez L."/>
            <person name="Sieber J."/>
            <person name="Struchtemeyer C.G."/>
            <person name="Bhattacharyya A."/>
            <person name="Campbell J.W."/>
            <person name="Gunsalus R.P."/>
        </authorList>
    </citation>
    <scope>NUCLEOTIDE SEQUENCE [LARGE SCALE GENOMIC DNA]</scope>
    <source>
        <strain>SB</strain>
    </source>
</reference>
<evidence type="ECO:0000255" key="1">
    <source>
        <dbReference type="HAMAP-Rule" id="MF_00011"/>
    </source>
</evidence>
<evidence type="ECO:0000305" key="2"/>